<protein>
    <recommendedName>
        <fullName>Snake venom metalloproteinase ACLH</fullName>
        <shortName>SVMP</shortName>
        <ecNumber>3.4.24.-</ecNumber>
    </recommendedName>
    <alternativeName>
        <fullName>ACL hemorrhagic toxin I</fullName>
        <shortName>ACLH-I</shortName>
        <shortName>ACLHT-I</shortName>
    </alternativeName>
    <alternativeName>
        <fullName>Hemorrhagic metalloproteinase ACLH</fullName>
    </alternativeName>
</protein>
<accession>Q92032</accession>
<reference key="1">
    <citation type="journal article" date="1995" name="Arch. Biochem. Biophys.">
        <title>Molecular cloning and sequence analysis of cDNAs for metalloproteinases from broad-banded copperhead Agkistrodon contortrix laticinctus.</title>
        <authorList>
            <person name="Selistre de Araujo H.S."/>
            <person name="Ownby C.L."/>
        </authorList>
    </citation>
    <scope>NUCLEOTIDE SEQUENCE [MRNA]</scope>
    <source>
        <tissue>Venom gland</tissue>
    </source>
</reference>
<reference key="2">
    <citation type="journal article" date="1993" name="Int. J. Biochem.">
        <title>Isolation of a hemorrhagic toxin from the venom of Agkistrodon contortrix laticinctus (broad-banded copperhead) and pathogenesis of the hemorrhage induced by the toxin in mice.</title>
        <authorList>
            <person name="Johnson E.K."/>
            <person name="Ownby C.L."/>
        </authorList>
    </citation>
    <scope>PROTEIN SEQUENCE OF 188-208</scope>
    <scope>FUNCTION</scope>
    <source>
        <tissue>Venom</tissue>
    </source>
</reference>
<reference key="3">
    <citation type="journal article" date="2001" name="Toxicon">
        <title>Regeneration and change of muscle fiber types after injury induced by a hemorrhagic fraction isolated from Agkistrodon contortrix laticinctus venom.</title>
        <authorList>
            <person name="Salvini T.F."/>
            <person name="Belluzzo S.S."/>
            <person name="Selistre de Araujo H.S."/>
            <person name="Souza D.H.S."/>
        </authorList>
    </citation>
    <scope>FUNCTION</scope>
    <source>
        <tissue>Venom</tissue>
    </source>
</reference>
<reference key="4">
    <citation type="journal article" date="2004" name="Comp. Biochem. Physiol.">
        <title>The effect of post-translational modifications on the hemorrhagic activity of snake venom metalloproteinases.</title>
        <authorList>
            <person name="Garcia L.T."/>
            <person name="Parreiras e Silva L.T."/>
            <person name="Ramos O.H.P."/>
            <person name="Carmona A.K."/>
            <person name="Bersanetti P.A."/>
            <person name="Selistre de Araujo H.S."/>
        </authorList>
    </citation>
    <scope>FUNCTION</scope>
    <scope>GLYCOSYLATION</scope>
</reference>
<comment type="function">
    <text evidence="5 6 7">This zinc hemorrhagic metalloproteinase has fibrino(geno)lytic activities. It causes hemorrhage and has myonecrotic activity on both fiber types I and II. The recombinant enzyme, without post-translational modifications, also has proteolytic activity, but does not show any hemorrhagic activity.</text>
</comment>
<comment type="cofactor">
    <cofactor evidence="1">
        <name>Zn(2+)</name>
        <dbReference type="ChEBI" id="CHEBI:29105"/>
    </cofactor>
    <text evidence="1">Binds 1 zinc ion per subunit.</text>
</comment>
<comment type="subunit">
    <text evidence="1">Monomer.</text>
</comment>
<comment type="subcellular location">
    <subcellularLocation>
        <location>Secreted</location>
    </subcellularLocation>
</comment>
<comment type="tissue specificity">
    <text>Expressed by the venom gland.</text>
</comment>
<comment type="PTM">
    <text evidence="6">Contains sialic acid terminally alpha(2-6)-linked to galactose in a complex N-glycan chain.</text>
</comment>
<comment type="similarity">
    <text evidence="8">Belongs to the venom metalloproteinase (M12B) family. P-I subfamily.</text>
</comment>
<feature type="signal peptide" evidence="2">
    <location>
        <begin position="1"/>
        <end position="20"/>
    </location>
</feature>
<feature type="propeptide" id="PRO_5000144381" evidence="7">
    <location>
        <begin position="21"/>
        <end position="187"/>
    </location>
</feature>
<feature type="chain" id="PRO_5000144382" description="Snake venom metalloproteinase ACLH">
    <location>
        <begin position="188"/>
        <end position="407"/>
    </location>
</feature>
<feature type="domain" description="Peptidase M12B" evidence="3">
    <location>
        <begin position="193"/>
        <end position="389"/>
    </location>
</feature>
<feature type="active site" evidence="3 4">
    <location>
        <position position="330"/>
    </location>
</feature>
<feature type="binding site" evidence="1">
    <location>
        <position position="196"/>
    </location>
    <ligand>
        <name>Ca(2+)</name>
        <dbReference type="ChEBI" id="CHEBI:29108"/>
    </ligand>
</feature>
<feature type="binding site" evidence="1">
    <location>
        <position position="280"/>
    </location>
    <ligand>
        <name>Ca(2+)</name>
        <dbReference type="ChEBI" id="CHEBI:29108"/>
    </ligand>
</feature>
<feature type="binding site" evidence="1">
    <location>
        <position position="329"/>
    </location>
    <ligand>
        <name>Zn(2+)</name>
        <dbReference type="ChEBI" id="CHEBI:29105"/>
        <note>catalytic</note>
    </ligand>
</feature>
<feature type="binding site" evidence="1">
    <location>
        <position position="333"/>
    </location>
    <ligand>
        <name>Zn(2+)</name>
        <dbReference type="ChEBI" id="CHEBI:29105"/>
        <note>catalytic</note>
    </ligand>
</feature>
<feature type="binding site" evidence="1">
    <location>
        <position position="339"/>
    </location>
    <ligand>
        <name>Zn(2+)</name>
        <dbReference type="ChEBI" id="CHEBI:29105"/>
        <note>catalytic</note>
    </ligand>
</feature>
<feature type="binding site" evidence="1">
    <location>
        <position position="384"/>
    </location>
    <ligand>
        <name>Ca(2+)</name>
        <dbReference type="ChEBI" id="CHEBI:29108"/>
    </ligand>
</feature>
<feature type="binding site" evidence="1">
    <location>
        <position position="387"/>
    </location>
    <ligand>
        <name>Ca(2+)</name>
        <dbReference type="ChEBI" id="CHEBI:29108"/>
    </ligand>
</feature>
<feature type="glycosylation site" description="N-linked (GlcNAc...) asparagine" evidence="2">
    <location>
        <position position="367"/>
    </location>
</feature>
<feature type="disulfide bond" evidence="3">
    <location>
        <begin position="304"/>
        <end position="384"/>
    </location>
</feature>
<feature type="disulfide bond" evidence="3">
    <location>
        <begin position="344"/>
        <end position="368"/>
    </location>
</feature>
<feature type="disulfide bond" evidence="3">
    <location>
        <begin position="346"/>
        <end position="351"/>
    </location>
</feature>
<dbReference type="EC" id="3.4.24.-"/>
<dbReference type="EMBL" id="U18234">
    <property type="protein sequence ID" value="AAC59704.1"/>
    <property type="molecule type" value="mRNA"/>
</dbReference>
<dbReference type="PIR" id="S66260">
    <property type="entry name" value="S66260"/>
</dbReference>
<dbReference type="SMR" id="Q92032"/>
<dbReference type="MEROPS" id="M12.160"/>
<dbReference type="GO" id="GO:0005576">
    <property type="term" value="C:extracellular region"/>
    <property type="evidence" value="ECO:0007669"/>
    <property type="project" value="UniProtKB-SubCell"/>
</dbReference>
<dbReference type="GO" id="GO:0005886">
    <property type="term" value="C:plasma membrane"/>
    <property type="evidence" value="ECO:0007669"/>
    <property type="project" value="TreeGrafter"/>
</dbReference>
<dbReference type="GO" id="GO:0046872">
    <property type="term" value="F:metal ion binding"/>
    <property type="evidence" value="ECO:0007669"/>
    <property type="project" value="UniProtKB-KW"/>
</dbReference>
<dbReference type="GO" id="GO:0004222">
    <property type="term" value="F:metalloendopeptidase activity"/>
    <property type="evidence" value="ECO:0007669"/>
    <property type="project" value="InterPro"/>
</dbReference>
<dbReference type="GO" id="GO:0090729">
    <property type="term" value="F:toxin activity"/>
    <property type="evidence" value="ECO:0007669"/>
    <property type="project" value="UniProtKB-KW"/>
</dbReference>
<dbReference type="GO" id="GO:0006508">
    <property type="term" value="P:proteolysis"/>
    <property type="evidence" value="ECO:0007669"/>
    <property type="project" value="UniProtKB-KW"/>
</dbReference>
<dbReference type="CDD" id="cd04269">
    <property type="entry name" value="ZnMc_adamalysin_II_like"/>
    <property type="match status" value="1"/>
</dbReference>
<dbReference type="FunFam" id="3.40.390.10:FF:000002">
    <property type="entry name" value="Disintegrin and metalloproteinase domain-containing protein 22"/>
    <property type="match status" value="1"/>
</dbReference>
<dbReference type="Gene3D" id="3.40.390.10">
    <property type="entry name" value="Collagenase (Catalytic Domain)"/>
    <property type="match status" value="1"/>
</dbReference>
<dbReference type="InterPro" id="IPR024079">
    <property type="entry name" value="MetalloPept_cat_dom_sf"/>
</dbReference>
<dbReference type="InterPro" id="IPR001590">
    <property type="entry name" value="Peptidase_M12B"/>
</dbReference>
<dbReference type="InterPro" id="IPR002870">
    <property type="entry name" value="Peptidase_M12B_N"/>
</dbReference>
<dbReference type="InterPro" id="IPR034027">
    <property type="entry name" value="Reprolysin_adamalysin"/>
</dbReference>
<dbReference type="PANTHER" id="PTHR11905">
    <property type="entry name" value="ADAM A DISINTEGRIN AND METALLOPROTEASE DOMAIN"/>
    <property type="match status" value="1"/>
</dbReference>
<dbReference type="PANTHER" id="PTHR11905:SF32">
    <property type="entry name" value="DISINTEGRIN AND METALLOPROTEINASE DOMAIN-CONTAINING PROTEIN 28"/>
    <property type="match status" value="1"/>
</dbReference>
<dbReference type="Pfam" id="PF01562">
    <property type="entry name" value="Pep_M12B_propep"/>
    <property type="match status" value="1"/>
</dbReference>
<dbReference type="Pfam" id="PF01421">
    <property type="entry name" value="Reprolysin"/>
    <property type="match status" value="1"/>
</dbReference>
<dbReference type="SUPFAM" id="SSF55486">
    <property type="entry name" value="Metalloproteases ('zincins'), catalytic domain"/>
    <property type="match status" value="1"/>
</dbReference>
<dbReference type="PROSITE" id="PS50215">
    <property type="entry name" value="ADAM_MEPRO"/>
    <property type="match status" value="1"/>
</dbReference>
<dbReference type="PROSITE" id="PS00142">
    <property type="entry name" value="ZINC_PROTEASE"/>
    <property type="match status" value="1"/>
</dbReference>
<organism>
    <name type="scientific">Agkistrodon contortrix laticinctus</name>
    <name type="common">Broad-banded copperhead</name>
    <name type="synonym">Agkistrodon mokasen laticinctus</name>
    <dbReference type="NCBI Taxonomy" id="2782196"/>
    <lineage>
        <taxon>Eukaryota</taxon>
        <taxon>Metazoa</taxon>
        <taxon>Chordata</taxon>
        <taxon>Craniata</taxon>
        <taxon>Vertebrata</taxon>
        <taxon>Euteleostomi</taxon>
        <taxon>Lepidosauria</taxon>
        <taxon>Squamata</taxon>
        <taxon>Bifurcata</taxon>
        <taxon>Unidentata</taxon>
        <taxon>Episquamata</taxon>
        <taxon>Toxicofera</taxon>
        <taxon>Serpentes</taxon>
        <taxon>Colubroidea</taxon>
        <taxon>Viperidae</taxon>
        <taxon>Crotalinae</taxon>
        <taxon>Agkistrodon</taxon>
    </lineage>
</organism>
<proteinExistence type="evidence at protein level"/>
<name>VM1AH_AGKCL</name>
<sequence>MIQVLLVTLCLAAFPYQGSSIILESGNVNDYEVVYPRKVTPVPKGAVQPKYEDAMQYELKVNGEPVVLHLERNKGLFSKDYSETHYSPDGRKITTYPPVEDHCYYHGRIQNDADSIASISACNGLKGHFKLQGEMYLIEPLELSDSEAHAVFKYENVEKEDEAPKICGVTQNWESYEPIKKASQLNLNYQYQRYVELVTVVDHGMYTKYNGDSDKIRQWVHQMVNTMKESYRYMYIDISLAGVEIWSNKDLIDVQPAARHTLDSFGEWRERDLLHRISHDNAQLLTSTDFDGPTIGLAYVGTMCDPKLSTGVVEDHSKINFLVAVTMAHEMGHNLGMRHDTGSCSCGGYSCIMSPVISDDSPKYFSNCSYIQCWDFIMKENPQCILNKPLRTDTVSTPVSGDELLEA</sequence>
<keyword id="KW-0106">Calcium</keyword>
<keyword id="KW-1217">Cell adhesion impairing toxin</keyword>
<keyword id="KW-0903">Direct protein sequencing</keyword>
<keyword id="KW-1015">Disulfide bond</keyword>
<keyword id="KW-1206">Fibrinogenolytic toxin</keyword>
<keyword id="KW-1205">Fibrinolytic toxin</keyword>
<keyword id="KW-0325">Glycoprotein</keyword>
<keyword id="KW-1200">Hemorrhagic toxin</keyword>
<keyword id="KW-1199">Hemostasis impairing toxin</keyword>
<keyword id="KW-0378">Hydrolase</keyword>
<keyword id="KW-0479">Metal-binding</keyword>
<keyword id="KW-0482">Metalloprotease</keyword>
<keyword id="KW-0959">Myotoxin</keyword>
<keyword id="KW-0645">Protease</keyword>
<keyword id="KW-0964">Secreted</keyword>
<keyword id="KW-0730">Sialic acid</keyword>
<keyword id="KW-0732">Signal</keyword>
<keyword id="KW-0800">Toxin</keyword>
<keyword id="KW-0862">Zinc</keyword>
<keyword id="KW-0865">Zymogen</keyword>
<evidence type="ECO:0000250" key="1"/>
<evidence type="ECO:0000255" key="2"/>
<evidence type="ECO:0000255" key="3">
    <source>
        <dbReference type="PROSITE-ProRule" id="PRU00276"/>
    </source>
</evidence>
<evidence type="ECO:0000255" key="4">
    <source>
        <dbReference type="PROSITE-ProRule" id="PRU10095"/>
    </source>
</evidence>
<evidence type="ECO:0000269" key="5">
    <source>
    </source>
</evidence>
<evidence type="ECO:0000269" key="6">
    <source>
    </source>
</evidence>
<evidence type="ECO:0000269" key="7">
    <source>
    </source>
</evidence>
<evidence type="ECO:0000305" key="8"/>